<organism>
    <name type="scientific">Autographa californica nuclear polyhedrosis virus</name>
    <name type="common">AcMNPV</name>
    <dbReference type="NCBI Taxonomy" id="46015"/>
    <lineage>
        <taxon>Viruses</taxon>
        <taxon>Viruses incertae sedis</taxon>
        <taxon>Naldaviricetes</taxon>
        <taxon>Lefavirales</taxon>
        <taxon>Baculoviridae</taxon>
        <taxon>Alphabaculovirus</taxon>
        <taxon>Alphabaculovirus aucalifornicae</taxon>
    </lineage>
</organism>
<reference key="1">
    <citation type="journal article" date="1988" name="J. Virol.">
        <title>Characterization of an early gene accelerating expression of late genes of the baculovirus Autographa californica nuclear polyhedrosis virus.</title>
        <authorList>
            <person name="Crawford A."/>
            <person name="Miller L.K."/>
        </authorList>
    </citation>
    <scope>NUCLEOTIDE SEQUENCE [GENOMIC DNA]</scope>
    <source>
        <strain>L1</strain>
    </source>
</reference>
<reference key="2">
    <citation type="journal article" date="1994" name="Virology">
        <title>The complete DNA sequence of Autographa californica nuclear polyhedrosis virus.</title>
        <authorList>
            <person name="Ayres M.D."/>
            <person name="Howard S.C."/>
            <person name="Kuzio J."/>
            <person name="Lopez-Ferber M."/>
            <person name="Possee R.D."/>
        </authorList>
    </citation>
    <scope>NUCLEOTIDE SEQUENCE [LARGE SCALE GENOMIC DNA]</scope>
    <source>
        <strain>C6</strain>
    </source>
</reference>
<accession>P11039</accession>
<name>ETM_NPVAC</name>
<proteinExistence type="predicted"/>
<feature type="chain" id="PRO_0000132867" description="ECORI-T site protein ETM">
    <location>
        <begin position="1"/>
        <end position="113"/>
    </location>
</feature>
<organismHost>
    <name type="scientific">Lepidoptera</name>
    <name type="common">butterflies and moths</name>
    <dbReference type="NCBI Taxonomy" id="7088"/>
</organismHost>
<protein>
    <recommendedName>
        <fullName>ECORI-T site protein ETM</fullName>
    </recommendedName>
</protein>
<dbReference type="EMBL" id="M20718">
    <property type="protein sequence ID" value="AAA21098.1"/>
    <property type="molecule type" value="Genomic_DNA"/>
</dbReference>
<dbReference type="EMBL" id="L22858">
    <property type="protein sequence ID" value="AAA66678.1"/>
    <property type="molecule type" value="Genomic_DNA"/>
</dbReference>
<dbReference type="PIR" id="B28147">
    <property type="entry name" value="WMNVEM"/>
</dbReference>
<dbReference type="KEGG" id="vg:1403880"/>
<dbReference type="OrthoDB" id="18821at10239"/>
<dbReference type="Proteomes" id="UP000008292">
    <property type="component" value="Segment"/>
</dbReference>
<dbReference type="InterPro" id="IPR035147">
    <property type="entry name" value="ETM"/>
</dbReference>
<dbReference type="Pfam" id="PF17577">
    <property type="entry name" value="ETM"/>
    <property type="match status" value="1"/>
</dbReference>
<gene>
    <name type="primary">ETM</name>
</gene>
<sequence length="113" mass="12873">MDALHGICVNINKFYKCRRIVIEYDNCSASFTFNCVHDNRKVNCLEIVGLRRNEYVCLGKIINGDKIISVHENSVNGKIIVPVEDTFDFGLFTLKNKITDAVIKLNVYINETS</sequence>
<keyword id="KW-0244">Early protein</keyword>
<keyword id="KW-1185">Reference proteome</keyword>